<gene>
    <name evidence="1" type="primary">rex</name>
    <name type="ordered locus">LL1060</name>
    <name type="ORF">L71932</name>
</gene>
<organism>
    <name type="scientific">Lactococcus lactis subsp. lactis (strain IL1403)</name>
    <name type="common">Streptococcus lactis</name>
    <dbReference type="NCBI Taxonomy" id="272623"/>
    <lineage>
        <taxon>Bacteria</taxon>
        <taxon>Bacillati</taxon>
        <taxon>Bacillota</taxon>
        <taxon>Bacilli</taxon>
        <taxon>Lactobacillales</taxon>
        <taxon>Streptococcaceae</taxon>
        <taxon>Lactococcus</taxon>
    </lineage>
</organism>
<name>REX_LACLA</name>
<comment type="function">
    <text evidence="1">Modulates transcription in response to changes in cellular NADH/NAD(+) redox state.</text>
</comment>
<comment type="subunit">
    <text evidence="1">Homodimer.</text>
</comment>
<comment type="subcellular location">
    <subcellularLocation>
        <location evidence="1">Cytoplasm</location>
    </subcellularLocation>
</comment>
<comment type="similarity">
    <text evidence="1">Belongs to the transcriptional regulatory Rex family.</text>
</comment>
<comment type="sequence caution" evidence="2">
    <conflict type="frameshift">
        <sequence resource="EMBL-CDS" id="AAK05158"/>
    </conflict>
</comment>
<proteinExistence type="inferred from homology"/>
<feature type="chain" id="PRO_0000097893" description="Redox-sensing transcriptional repressor Rex">
    <location>
        <begin position="1"/>
        <end position="216"/>
    </location>
</feature>
<feature type="DNA-binding region" description="H-T-H motif" evidence="1">
    <location>
        <begin position="20"/>
        <end position="59"/>
    </location>
</feature>
<feature type="binding site" evidence="1">
    <location>
        <begin position="94"/>
        <end position="99"/>
    </location>
    <ligand>
        <name>NAD(+)</name>
        <dbReference type="ChEBI" id="CHEBI:57540"/>
    </ligand>
</feature>
<evidence type="ECO:0000255" key="1">
    <source>
        <dbReference type="HAMAP-Rule" id="MF_01131"/>
    </source>
</evidence>
<evidence type="ECO:0000305" key="2"/>
<accession>Q9CGN6</accession>
<keyword id="KW-0963">Cytoplasm</keyword>
<keyword id="KW-0238">DNA-binding</keyword>
<keyword id="KW-0520">NAD</keyword>
<keyword id="KW-1185">Reference proteome</keyword>
<keyword id="KW-0678">Repressor</keyword>
<keyword id="KW-0804">Transcription</keyword>
<keyword id="KW-0805">Transcription regulation</keyword>
<reference key="1">
    <citation type="journal article" date="2001" name="Genome Res.">
        <title>The complete genome sequence of the lactic acid bacterium Lactococcus lactis ssp. lactis IL1403.</title>
        <authorList>
            <person name="Bolotin A."/>
            <person name="Wincker P."/>
            <person name="Mauger S."/>
            <person name="Jaillon O."/>
            <person name="Malarme K."/>
            <person name="Weissenbach J."/>
            <person name="Ehrlich S.D."/>
            <person name="Sorokin A."/>
        </authorList>
    </citation>
    <scope>NUCLEOTIDE SEQUENCE [LARGE SCALE GENOMIC DNA]</scope>
    <source>
        <strain>IL1403</strain>
    </source>
</reference>
<protein>
    <recommendedName>
        <fullName evidence="1">Redox-sensing transcriptional repressor Rex</fullName>
    </recommendedName>
</protein>
<sequence>MTDHKPSKSLPKATAKRLPQYYRLFKSLVEENVTRTNSQLISEKIGVDAATIRRDFSLFGELGRRGYGYETKVLRDFFGELLGQDQETHIALIGVGNLGRALLHYQFQDRNKMRITQAYDISGNPLVGTQTDDGIPIYNISDLEKNVKKSDIKTAILSVRKENAQEVVDTLVKAGIKVSLNFAPIRLKVPSDVVVQSIDLTKELQTLLFFMNDNKQ</sequence>
<dbReference type="EMBL" id="AE005176">
    <property type="protein sequence ID" value="AAK05158.1"/>
    <property type="status" value="ALT_FRAME"/>
    <property type="molecule type" value="Genomic_DNA"/>
</dbReference>
<dbReference type="PIR" id="D86757">
    <property type="entry name" value="D86757"/>
</dbReference>
<dbReference type="RefSeq" id="NP_267216.1">
    <property type="nucleotide sequence ID" value="NC_002662.1"/>
</dbReference>
<dbReference type="SMR" id="Q9CGN6"/>
<dbReference type="PaxDb" id="272623-L71932"/>
<dbReference type="EnsemblBacteria" id="AAK05158">
    <property type="protein sequence ID" value="AAK05158"/>
    <property type="gene ID" value="L71932"/>
</dbReference>
<dbReference type="KEGG" id="lla:L71932"/>
<dbReference type="PATRIC" id="fig|272623.7.peg.1133"/>
<dbReference type="eggNOG" id="COG2344">
    <property type="taxonomic scope" value="Bacteria"/>
</dbReference>
<dbReference type="HOGENOM" id="CLU_061534_1_1_9"/>
<dbReference type="OrthoDB" id="9784760at2"/>
<dbReference type="Proteomes" id="UP000002196">
    <property type="component" value="Chromosome"/>
</dbReference>
<dbReference type="GO" id="GO:0005737">
    <property type="term" value="C:cytoplasm"/>
    <property type="evidence" value="ECO:0007669"/>
    <property type="project" value="UniProtKB-SubCell"/>
</dbReference>
<dbReference type="GO" id="GO:0003677">
    <property type="term" value="F:DNA binding"/>
    <property type="evidence" value="ECO:0007669"/>
    <property type="project" value="UniProtKB-UniRule"/>
</dbReference>
<dbReference type="GO" id="GO:0003700">
    <property type="term" value="F:DNA-binding transcription factor activity"/>
    <property type="evidence" value="ECO:0007669"/>
    <property type="project" value="UniProtKB-UniRule"/>
</dbReference>
<dbReference type="GO" id="GO:0045892">
    <property type="term" value="P:negative regulation of DNA-templated transcription"/>
    <property type="evidence" value="ECO:0007669"/>
    <property type="project" value="InterPro"/>
</dbReference>
<dbReference type="GO" id="GO:0051775">
    <property type="term" value="P:response to redox state"/>
    <property type="evidence" value="ECO:0007669"/>
    <property type="project" value="InterPro"/>
</dbReference>
<dbReference type="Gene3D" id="3.40.50.720">
    <property type="entry name" value="NAD(P)-binding Rossmann-like Domain"/>
    <property type="match status" value="1"/>
</dbReference>
<dbReference type="Gene3D" id="1.10.10.10">
    <property type="entry name" value="Winged helix-like DNA-binding domain superfamily/Winged helix DNA-binding domain"/>
    <property type="match status" value="1"/>
</dbReference>
<dbReference type="HAMAP" id="MF_01131">
    <property type="entry name" value="Rex"/>
    <property type="match status" value="1"/>
</dbReference>
<dbReference type="InterPro" id="IPR003781">
    <property type="entry name" value="CoA-bd"/>
</dbReference>
<dbReference type="InterPro" id="IPR036291">
    <property type="entry name" value="NAD(P)-bd_dom_sf"/>
</dbReference>
<dbReference type="InterPro" id="IPR009718">
    <property type="entry name" value="Rex_DNA-bd_C_dom"/>
</dbReference>
<dbReference type="InterPro" id="IPR022876">
    <property type="entry name" value="Tscrpt_rep_Rex"/>
</dbReference>
<dbReference type="InterPro" id="IPR036388">
    <property type="entry name" value="WH-like_DNA-bd_sf"/>
</dbReference>
<dbReference type="InterPro" id="IPR036390">
    <property type="entry name" value="WH_DNA-bd_sf"/>
</dbReference>
<dbReference type="NCBIfam" id="NF003989">
    <property type="entry name" value="PRK05472.1-3"/>
    <property type="match status" value="1"/>
</dbReference>
<dbReference type="NCBIfam" id="NF003991">
    <property type="entry name" value="PRK05472.1-5"/>
    <property type="match status" value="1"/>
</dbReference>
<dbReference type="NCBIfam" id="NF003994">
    <property type="entry name" value="PRK05472.2-3"/>
    <property type="match status" value="1"/>
</dbReference>
<dbReference type="NCBIfam" id="NF003995">
    <property type="entry name" value="PRK05472.2-4"/>
    <property type="match status" value="1"/>
</dbReference>
<dbReference type="NCBIfam" id="NF003996">
    <property type="entry name" value="PRK05472.2-5"/>
    <property type="match status" value="1"/>
</dbReference>
<dbReference type="PANTHER" id="PTHR35786">
    <property type="entry name" value="REDOX-SENSING TRANSCRIPTIONAL REPRESSOR REX"/>
    <property type="match status" value="1"/>
</dbReference>
<dbReference type="PANTHER" id="PTHR35786:SF1">
    <property type="entry name" value="REDOX-SENSING TRANSCRIPTIONAL REPRESSOR REX 1"/>
    <property type="match status" value="1"/>
</dbReference>
<dbReference type="Pfam" id="PF02629">
    <property type="entry name" value="CoA_binding"/>
    <property type="match status" value="1"/>
</dbReference>
<dbReference type="Pfam" id="PF06971">
    <property type="entry name" value="Put_DNA-bind_N"/>
    <property type="match status" value="1"/>
</dbReference>
<dbReference type="SMART" id="SM00881">
    <property type="entry name" value="CoA_binding"/>
    <property type="match status" value="1"/>
</dbReference>
<dbReference type="SUPFAM" id="SSF51735">
    <property type="entry name" value="NAD(P)-binding Rossmann-fold domains"/>
    <property type="match status" value="1"/>
</dbReference>
<dbReference type="SUPFAM" id="SSF46785">
    <property type="entry name" value="Winged helix' DNA-binding domain"/>
    <property type="match status" value="1"/>
</dbReference>